<gene>
    <name evidence="2" type="primary">infB</name>
    <name type="ordered locus">Mboo_2294</name>
</gene>
<keyword id="KW-0342">GTP-binding</keyword>
<keyword id="KW-0396">Initiation factor</keyword>
<keyword id="KW-0547">Nucleotide-binding</keyword>
<keyword id="KW-0648">Protein biosynthesis</keyword>
<keyword id="KW-1185">Reference proteome</keyword>
<comment type="function">
    <text evidence="2">Function in general translation initiation by promoting the binding of the formylmethionine-tRNA to ribosomes. Seems to function along with eIF-2.</text>
</comment>
<comment type="similarity">
    <text evidence="2">Belongs to the TRAFAC class translation factor GTPase superfamily. Classic translation factor GTPase family. IF-2 subfamily.</text>
</comment>
<reference key="1">
    <citation type="journal article" date="2015" name="Microbiology">
        <title>Genome of Methanoregula boonei 6A8 reveals adaptations to oligotrophic peatland environments.</title>
        <authorList>
            <person name="Braeuer S."/>
            <person name="Cadillo-Quiroz H."/>
            <person name="Kyrpides N."/>
            <person name="Woyke T."/>
            <person name="Goodwin L."/>
            <person name="Detter C."/>
            <person name="Podell S."/>
            <person name="Yavitt J.B."/>
            <person name="Zinder S.H."/>
        </authorList>
    </citation>
    <scope>NUCLEOTIDE SEQUENCE [LARGE SCALE GENOMIC DNA]</scope>
    <source>
        <strain>DSM 21154 / JCM 14090 / 6A8</strain>
    </source>
</reference>
<organism>
    <name type="scientific">Methanoregula boonei (strain DSM 21154 / JCM 14090 / 6A8)</name>
    <dbReference type="NCBI Taxonomy" id="456442"/>
    <lineage>
        <taxon>Archaea</taxon>
        <taxon>Methanobacteriati</taxon>
        <taxon>Methanobacteriota</taxon>
        <taxon>Stenosarchaea group</taxon>
        <taxon>Methanomicrobia</taxon>
        <taxon>Methanomicrobiales</taxon>
        <taxon>Methanoregulaceae</taxon>
        <taxon>Methanoregula</taxon>
    </lineage>
</organism>
<protein>
    <recommendedName>
        <fullName evidence="2">Probable translation initiation factor IF-2</fullName>
    </recommendedName>
</protein>
<accession>A7IAP7</accession>
<dbReference type="EMBL" id="CP000780">
    <property type="protein sequence ID" value="ABS56808.1"/>
    <property type="molecule type" value="Genomic_DNA"/>
</dbReference>
<dbReference type="RefSeq" id="WP_012107868.1">
    <property type="nucleotide sequence ID" value="NC_009712.1"/>
</dbReference>
<dbReference type="SMR" id="A7IAP7"/>
<dbReference type="STRING" id="456442.Mboo_2294"/>
<dbReference type="GeneID" id="5410885"/>
<dbReference type="KEGG" id="mbn:Mboo_2294"/>
<dbReference type="eggNOG" id="arCOG01560">
    <property type="taxonomic scope" value="Archaea"/>
</dbReference>
<dbReference type="HOGENOM" id="CLU_002656_3_3_2"/>
<dbReference type="OrthoDB" id="30957at2157"/>
<dbReference type="Proteomes" id="UP000002408">
    <property type="component" value="Chromosome"/>
</dbReference>
<dbReference type="GO" id="GO:0005737">
    <property type="term" value="C:cytoplasm"/>
    <property type="evidence" value="ECO:0007669"/>
    <property type="project" value="TreeGrafter"/>
</dbReference>
<dbReference type="GO" id="GO:0005525">
    <property type="term" value="F:GTP binding"/>
    <property type="evidence" value="ECO:0007669"/>
    <property type="project" value="UniProtKB-KW"/>
</dbReference>
<dbReference type="GO" id="GO:0003924">
    <property type="term" value="F:GTPase activity"/>
    <property type="evidence" value="ECO:0007669"/>
    <property type="project" value="UniProtKB-UniRule"/>
</dbReference>
<dbReference type="GO" id="GO:0003743">
    <property type="term" value="F:translation initiation factor activity"/>
    <property type="evidence" value="ECO:0007669"/>
    <property type="project" value="UniProtKB-UniRule"/>
</dbReference>
<dbReference type="CDD" id="cd03703">
    <property type="entry name" value="aeIF5B_II"/>
    <property type="match status" value="1"/>
</dbReference>
<dbReference type="CDD" id="cd16266">
    <property type="entry name" value="IF2_aeIF5B_IV"/>
    <property type="match status" value="1"/>
</dbReference>
<dbReference type="CDD" id="cd01887">
    <property type="entry name" value="IF2_eIF5B"/>
    <property type="match status" value="1"/>
</dbReference>
<dbReference type="FunFam" id="3.40.50.300:FF:000112">
    <property type="entry name" value="Eukaryotic translation initiation factor 5B"/>
    <property type="match status" value="1"/>
</dbReference>
<dbReference type="FunFam" id="2.40.30.10:FF:000013">
    <property type="entry name" value="eukaryotic translation initiation factor 5B"/>
    <property type="match status" value="1"/>
</dbReference>
<dbReference type="Gene3D" id="3.40.50.300">
    <property type="entry name" value="P-loop containing nucleotide triphosphate hydrolases"/>
    <property type="match status" value="1"/>
</dbReference>
<dbReference type="Gene3D" id="2.40.30.10">
    <property type="entry name" value="Translation factors"/>
    <property type="match status" value="2"/>
</dbReference>
<dbReference type="Gene3D" id="3.40.50.10050">
    <property type="entry name" value="Translation initiation factor IF- 2, domain 3"/>
    <property type="match status" value="1"/>
</dbReference>
<dbReference type="HAMAP" id="MF_00100_A">
    <property type="entry name" value="IF_2_A"/>
    <property type="match status" value="1"/>
</dbReference>
<dbReference type="InterPro" id="IPR029459">
    <property type="entry name" value="EFTU-type"/>
</dbReference>
<dbReference type="InterPro" id="IPR027417">
    <property type="entry name" value="P-loop_NTPase"/>
</dbReference>
<dbReference type="InterPro" id="IPR005225">
    <property type="entry name" value="Small_GTP-bd"/>
</dbReference>
<dbReference type="InterPro" id="IPR000795">
    <property type="entry name" value="T_Tr_GTP-bd_dom"/>
</dbReference>
<dbReference type="InterPro" id="IPR004544">
    <property type="entry name" value="TF_aIF-2_arc"/>
</dbReference>
<dbReference type="InterPro" id="IPR015760">
    <property type="entry name" value="TIF_IF2"/>
</dbReference>
<dbReference type="InterPro" id="IPR023115">
    <property type="entry name" value="TIF_IF2_dom3"/>
</dbReference>
<dbReference type="InterPro" id="IPR036925">
    <property type="entry name" value="TIF_IF2_dom3_sf"/>
</dbReference>
<dbReference type="InterPro" id="IPR009000">
    <property type="entry name" value="Transl_B-barrel_sf"/>
</dbReference>
<dbReference type="NCBIfam" id="TIGR00491">
    <property type="entry name" value="aIF-2"/>
    <property type="match status" value="1"/>
</dbReference>
<dbReference type="NCBIfam" id="NF003078">
    <property type="entry name" value="PRK04004.1"/>
    <property type="match status" value="1"/>
</dbReference>
<dbReference type="NCBIfam" id="TIGR00231">
    <property type="entry name" value="small_GTP"/>
    <property type="match status" value="1"/>
</dbReference>
<dbReference type="PANTHER" id="PTHR43381:SF4">
    <property type="entry name" value="EUKARYOTIC TRANSLATION INITIATION FACTOR 5B"/>
    <property type="match status" value="1"/>
</dbReference>
<dbReference type="PANTHER" id="PTHR43381">
    <property type="entry name" value="TRANSLATION INITIATION FACTOR IF-2-RELATED"/>
    <property type="match status" value="1"/>
</dbReference>
<dbReference type="Pfam" id="PF00009">
    <property type="entry name" value="GTP_EFTU"/>
    <property type="match status" value="1"/>
</dbReference>
<dbReference type="Pfam" id="PF14578">
    <property type="entry name" value="GTP_EFTU_D4"/>
    <property type="match status" value="1"/>
</dbReference>
<dbReference type="Pfam" id="PF11987">
    <property type="entry name" value="IF-2"/>
    <property type="match status" value="1"/>
</dbReference>
<dbReference type="PRINTS" id="PR00315">
    <property type="entry name" value="ELONGATNFCT"/>
</dbReference>
<dbReference type="SUPFAM" id="SSF52156">
    <property type="entry name" value="Initiation factor IF2/eIF5b, domain 3"/>
    <property type="match status" value="1"/>
</dbReference>
<dbReference type="SUPFAM" id="SSF52540">
    <property type="entry name" value="P-loop containing nucleoside triphosphate hydrolases"/>
    <property type="match status" value="1"/>
</dbReference>
<dbReference type="SUPFAM" id="SSF50447">
    <property type="entry name" value="Translation proteins"/>
    <property type="match status" value="1"/>
</dbReference>
<dbReference type="PROSITE" id="PS51722">
    <property type="entry name" value="G_TR_2"/>
    <property type="match status" value="1"/>
</dbReference>
<sequence length="591" mass="65151">MSDPKIRTPIVCVMGHVDHGKTSLLDRIRGSSVVASEAGAITQHIGATIVPIEAIRKMSGSMEKIPINIPGLLFIDTPGHHAFTTLRARGGALADMAILVVDISQGFQPQTIEALQILRNCKTPFVIAATKVDRIHGWRINKDESFLSSFGKQNERVKTDIETKTYEIVGKLSDLGFSADRYDRVSDFQRNLAIVPVSAHTGEGIADLLMIMIGLAQRYMGEELKLSAEGPGEGTVLEVKEERGLGTTLDVILYNGTLSVGDEIAMASQDDVVTTKVRSLLKPRPMKEILIEDRFERVKSVVAASGIKVSAPGLEKVIAGSPLFVTRGNMDELAARIRKEMQEIHVNLAEEGIVIKADTIGALEALCKELESKEIKVMRAQVGPVSRHDLIDTETIKNPTFRVLLSFNTPILPDAADMIKDPLYTQVKVFSGQVIYQLIDQYVAWRDEQKRIAEKAQFEHVMMPAKIRLLPDCVFRQSNPAVVGVRVLGGKLRADVDLVKTDGKKIGHLKTMQLRQESIKEADAGLEVAISIEGATVGRQLNVGDDLLVDLPERHVKVLEREMLKNLNISTQEVLAEFVAIRRKAEPFWGK</sequence>
<feature type="chain" id="PRO_0000335528" description="Probable translation initiation factor IF-2">
    <location>
        <begin position="1"/>
        <end position="591"/>
    </location>
</feature>
<feature type="domain" description="tr-type G">
    <location>
        <begin position="6"/>
        <end position="220"/>
    </location>
</feature>
<feature type="region of interest" description="G1" evidence="1">
    <location>
        <begin position="15"/>
        <end position="22"/>
    </location>
</feature>
<feature type="region of interest" description="G2" evidence="1">
    <location>
        <begin position="40"/>
        <end position="44"/>
    </location>
</feature>
<feature type="region of interest" description="G3" evidence="1">
    <location>
        <begin position="76"/>
        <end position="79"/>
    </location>
</feature>
<feature type="region of interest" description="G4" evidence="1">
    <location>
        <begin position="130"/>
        <end position="133"/>
    </location>
</feature>
<feature type="region of interest" description="G5" evidence="1">
    <location>
        <begin position="198"/>
        <end position="200"/>
    </location>
</feature>
<feature type="binding site" evidence="2">
    <location>
        <begin position="15"/>
        <end position="22"/>
    </location>
    <ligand>
        <name>GTP</name>
        <dbReference type="ChEBI" id="CHEBI:37565"/>
    </ligand>
</feature>
<feature type="binding site" evidence="2">
    <location>
        <begin position="76"/>
        <end position="80"/>
    </location>
    <ligand>
        <name>GTP</name>
        <dbReference type="ChEBI" id="CHEBI:37565"/>
    </ligand>
</feature>
<feature type="binding site" evidence="2">
    <location>
        <begin position="130"/>
        <end position="133"/>
    </location>
    <ligand>
        <name>GTP</name>
        <dbReference type="ChEBI" id="CHEBI:37565"/>
    </ligand>
</feature>
<proteinExistence type="inferred from homology"/>
<name>IF2P_METB6</name>
<evidence type="ECO:0000250" key="1"/>
<evidence type="ECO:0000255" key="2">
    <source>
        <dbReference type="HAMAP-Rule" id="MF_00100"/>
    </source>
</evidence>